<feature type="chain" id="PRO_1000119261" description="33 kDa chaperonin">
    <location>
        <begin position="1"/>
        <end position="294"/>
    </location>
</feature>
<feature type="disulfide bond" description="Redox-active" evidence="1">
    <location>
        <begin position="239"/>
        <end position="241"/>
    </location>
</feature>
<feature type="disulfide bond" description="Redox-active" evidence="1">
    <location>
        <begin position="272"/>
        <end position="275"/>
    </location>
</feature>
<reference key="1">
    <citation type="journal article" date="2011" name="J. Bacteriol.">
        <title>Genome sequence of lineage III Listeria monocytogenes strain HCC23.</title>
        <authorList>
            <person name="Steele C.L."/>
            <person name="Donaldson J.R."/>
            <person name="Paul D."/>
            <person name="Banes M.M."/>
            <person name="Arick T."/>
            <person name="Bridges S.M."/>
            <person name="Lawrence M.L."/>
        </authorList>
    </citation>
    <scope>NUCLEOTIDE SEQUENCE [LARGE SCALE GENOMIC DNA]</scope>
    <source>
        <strain>HCC23</strain>
    </source>
</reference>
<organism>
    <name type="scientific">Listeria monocytogenes serotype 4a (strain HCC23)</name>
    <dbReference type="NCBI Taxonomy" id="552536"/>
    <lineage>
        <taxon>Bacteria</taxon>
        <taxon>Bacillati</taxon>
        <taxon>Bacillota</taxon>
        <taxon>Bacilli</taxon>
        <taxon>Bacillales</taxon>
        <taxon>Listeriaceae</taxon>
        <taxon>Listeria</taxon>
    </lineage>
</organism>
<gene>
    <name evidence="1" type="primary">hslO</name>
    <name type="ordered locus">LMHCC_2421</name>
</gene>
<proteinExistence type="inferred from homology"/>
<name>HSLO_LISMH</name>
<comment type="function">
    <text evidence="1">Redox regulated molecular chaperone. Protects both thermally unfolding and oxidatively damaged proteins from irreversible aggregation. Plays an important role in the bacterial defense system toward oxidative stress.</text>
</comment>
<comment type="subcellular location">
    <subcellularLocation>
        <location evidence="1">Cytoplasm</location>
    </subcellularLocation>
</comment>
<comment type="PTM">
    <text evidence="1">Under oxidizing conditions two disulfide bonds are formed involving the reactive cysteines. Under reducing conditions zinc is bound to the reactive cysteines and the protein is inactive.</text>
</comment>
<comment type="similarity">
    <text evidence="1">Belongs to the HSP33 family.</text>
</comment>
<accession>B8DGK3</accession>
<keyword id="KW-0143">Chaperone</keyword>
<keyword id="KW-0963">Cytoplasm</keyword>
<keyword id="KW-1015">Disulfide bond</keyword>
<keyword id="KW-0676">Redox-active center</keyword>
<keyword id="KW-0862">Zinc</keyword>
<evidence type="ECO:0000255" key="1">
    <source>
        <dbReference type="HAMAP-Rule" id="MF_00117"/>
    </source>
</evidence>
<protein>
    <recommendedName>
        <fullName evidence="1">33 kDa chaperonin</fullName>
    </recommendedName>
    <alternativeName>
        <fullName evidence="1">Heat shock protein 33 homolog</fullName>
        <shortName evidence="1">HSP33</shortName>
    </alternativeName>
</protein>
<sequence>MSDYLVKALAYDGMARVYAAVTTETIKEAQRRHDTWSVSSAALGRTMTGTLFLGAMQKEDQKITVKIEGDGPIGPIVADSNAQGQIRGYVTNPHVHFSELNEAGKLDVRRGVGTSGMLSVVKDLGFGENFTGQTPIVSGEIGEDFTYYLATSEQINSSVGVGVLVNPDDTIEAAGGFMLQLLPGATDEIIDEIEKNLTALPTVSRMIEAGETPESILAKLAGGEDKLQILEKIPVSFECNCSKERFGSAIISLGKEEIRSMIEEDHGAEAECHFCRNTYDFSEEELEKLYEEAK</sequence>
<dbReference type="EMBL" id="CP001175">
    <property type="protein sequence ID" value="ACK40756.1"/>
    <property type="molecule type" value="Genomic_DNA"/>
</dbReference>
<dbReference type="RefSeq" id="WP_003725747.1">
    <property type="nucleotide sequence ID" value="NC_011660.1"/>
</dbReference>
<dbReference type="SMR" id="B8DGK3"/>
<dbReference type="KEGG" id="lmh:LMHCC_2421"/>
<dbReference type="HOGENOM" id="CLU_054493_1_0_9"/>
<dbReference type="GO" id="GO:0005737">
    <property type="term" value="C:cytoplasm"/>
    <property type="evidence" value="ECO:0007669"/>
    <property type="project" value="UniProtKB-SubCell"/>
</dbReference>
<dbReference type="GO" id="GO:0044183">
    <property type="term" value="F:protein folding chaperone"/>
    <property type="evidence" value="ECO:0007669"/>
    <property type="project" value="TreeGrafter"/>
</dbReference>
<dbReference type="GO" id="GO:0051082">
    <property type="term" value="F:unfolded protein binding"/>
    <property type="evidence" value="ECO:0007669"/>
    <property type="project" value="UniProtKB-UniRule"/>
</dbReference>
<dbReference type="GO" id="GO:0042026">
    <property type="term" value="P:protein refolding"/>
    <property type="evidence" value="ECO:0007669"/>
    <property type="project" value="TreeGrafter"/>
</dbReference>
<dbReference type="CDD" id="cd00498">
    <property type="entry name" value="Hsp33"/>
    <property type="match status" value="1"/>
</dbReference>
<dbReference type="Gene3D" id="3.55.30.10">
    <property type="entry name" value="Hsp33 domain"/>
    <property type="match status" value="1"/>
</dbReference>
<dbReference type="Gene3D" id="3.90.1280.10">
    <property type="entry name" value="HSP33 redox switch-like"/>
    <property type="match status" value="1"/>
</dbReference>
<dbReference type="HAMAP" id="MF_00117">
    <property type="entry name" value="HslO"/>
    <property type="match status" value="1"/>
</dbReference>
<dbReference type="InterPro" id="IPR000397">
    <property type="entry name" value="Heat_shock_Hsp33"/>
</dbReference>
<dbReference type="InterPro" id="IPR016154">
    <property type="entry name" value="Heat_shock_Hsp33_C"/>
</dbReference>
<dbReference type="InterPro" id="IPR016153">
    <property type="entry name" value="Heat_shock_Hsp33_N"/>
</dbReference>
<dbReference type="NCBIfam" id="NF001033">
    <property type="entry name" value="PRK00114.1"/>
    <property type="match status" value="1"/>
</dbReference>
<dbReference type="PANTHER" id="PTHR30111">
    <property type="entry name" value="33 KDA CHAPERONIN"/>
    <property type="match status" value="1"/>
</dbReference>
<dbReference type="PANTHER" id="PTHR30111:SF1">
    <property type="entry name" value="33 KDA CHAPERONIN"/>
    <property type="match status" value="1"/>
</dbReference>
<dbReference type="Pfam" id="PF01430">
    <property type="entry name" value="HSP33"/>
    <property type="match status" value="1"/>
</dbReference>
<dbReference type="PIRSF" id="PIRSF005261">
    <property type="entry name" value="Heat_shock_Hsp33"/>
    <property type="match status" value="1"/>
</dbReference>
<dbReference type="SUPFAM" id="SSF64397">
    <property type="entry name" value="Hsp33 domain"/>
    <property type="match status" value="1"/>
</dbReference>
<dbReference type="SUPFAM" id="SSF118352">
    <property type="entry name" value="HSP33 redox switch-like"/>
    <property type="match status" value="1"/>
</dbReference>